<reference key="1">
    <citation type="journal article" date="2008" name="J. Bacteriol.">
        <title>The pangenome structure of Escherichia coli: comparative genomic analysis of E. coli commensal and pathogenic isolates.</title>
        <authorList>
            <person name="Rasko D.A."/>
            <person name="Rosovitz M.J."/>
            <person name="Myers G.S.A."/>
            <person name="Mongodin E.F."/>
            <person name="Fricke W.F."/>
            <person name="Gajer P."/>
            <person name="Crabtree J."/>
            <person name="Sebaihia M."/>
            <person name="Thomson N.R."/>
            <person name="Chaudhuri R."/>
            <person name="Henderson I.R."/>
            <person name="Sperandio V."/>
            <person name="Ravel J."/>
        </authorList>
    </citation>
    <scope>NUCLEOTIDE SEQUENCE [LARGE SCALE GENOMIC DNA]</scope>
    <source>
        <strain>E24377A / ETEC</strain>
    </source>
</reference>
<name>MNMA_ECO24</name>
<dbReference type="EC" id="2.8.1.13" evidence="1"/>
<dbReference type="EMBL" id="CP000800">
    <property type="protein sequence ID" value="ABV18441.1"/>
    <property type="molecule type" value="Genomic_DNA"/>
</dbReference>
<dbReference type="RefSeq" id="WP_001297484.1">
    <property type="nucleotide sequence ID" value="NC_009801.1"/>
</dbReference>
<dbReference type="SMR" id="A7ZKS3"/>
<dbReference type="GeneID" id="75203719"/>
<dbReference type="KEGG" id="ecw:EcE24377A_1296"/>
<dbReference type="HOGENOM" id="CLU_035188_1_0_6"/>
<dbReference type="Proteomes" id="UP000001122">
    <property type="component" value="Chromosome"/>
</dbReference>
<dbReference type="GO" id="GO:0005737">
    <property type="term" value="C:cytoplasm"/>
    <property type="evidence" value="ECO:0007669"/>
    <property type="project" value="UniProtKB-SubCell"/>
</dbReference>
<dbReference type="GO" id="GO:0005524">
    <property type="term" value="F:ATP binding"/>
    <property type="evidence" value="ECO:0007669"/>
    <property type="project" value="UniProtKB-KW"/>
</dbReference>
<dbReference type="GO" id="GO:0000049">
    <property type="term" value="F:tRNA binding"/>
    <property type="evidence" value="ECO:0007669"/>
    <property type="project" value="UniProtKB-KW"/>
</dbReference>
<dbReference type="GO" id="GO:0103016">
    <property type="term" value="F:tRNA-uridine 2-sulfurtransferase activity"/>
    <property type="evidence" value="ECO:0007669"/>
    <property type="project" value="UniProtKB-EC"/>
</dbReference>
<dbReference type="GO" id="GO:0002143">
    <property type="term" value="P:tRNA wobble position uridine thiolation"/>
    <property type="evidence" value="ECO:0007669"/>
    <property type="project" value="TreeGrafter"/>
</dbReference>
<dbReference type="CDD" id="cd01998">
    <property type="entry name" value="MnmA_TRMU-like"/>
    <property type="match status" value="1"/>
</dbReference>
<dbReference type="FunFam" id="2.30.30.280:FF:000001">
    <property type="entry name" value="tRNA-specific 2-thiouridylase MnmA"/>
    <property type="match status" value="1"/>
</dbReference>
<dbReference type="FunFam" id="2.40.30.10:FF:000023">
    <property type="entry name" value="tRNA-specific 2-thiouridylase MnmA"/>
    <property type="match status" value="1"/>
</dbReference>
<dbReference type="FunFam" id="3.40.50.620:FF:000004">
    <property type="entry name" value="tRNA-specific 2-thiouridylase MnmA"/>
    <property type="match status" value="1"/>
</dbReference>
<dbReference type="Gene3D" id="2.30.30.280">
    <property type="entry name" value="Adenine nucleotide alpha hydrolases-like domains"/>
    <property type="match status" value="1"/>
</dbReference>
<dbReference type="Gene3D" id="3.40.50.620">
    <property type="entry name" value="HUPs"/>
    <property type="match status" value="1"/>
</dbReference>
<dbReference type="Gene3D" id="2.40.30.10">
    <property type="entry name" value="Translation factors"/>
    <property type="match status" value="1"/>
</dbReference>
<dbReference type="HAMAP" id="MF_00144">
    <property type="entry name" value="tRNA_thiouridyl_MnmA"/>
    <property type="match status" value="1"/>
</dbReference>
<dbReference type="InterPro" id="IPR004506">
    <property type="entry name" value="MnmA-like"/>
</dbReference>
<dbReference type="InterPro" id="IPR046885">
    <property type="entry name" value="MnmA-like_C"/>
</dbReference>
<dbReference type="InterPro" id="IPR046884">
    <property type="entry name" value="MnmA-like_central"/>
</dbReference>
<dbReference type="InterPro" id="IPR023382">
    <property type="entry name" value="MnmA-like_central_sf"/>
</dbReference>
<dbReference type="InterPro" id="IPR014729">
    <property type="entry name" value="Rossmann-like_a/b/a_fold"/>
</dbReference>
<dbReference type="NCBIfam" id="NF001138">
    <property type="entry name" value="PRK00143.1"/>
    <property type="match status" value="1"/>
</dbReference>
<dbReference type="NCBIfam" id="TIGR00420">
    <property type="entry name" value="trmU"/>
    <property type="match status" value="1"/>
</dbReference>
<dbReference type="PANTHER" id="PTHR11933:SF5">
    <property type="entry name" value="MITOCHONDRIAL TRNA-SPECIFIC 2-THIOURIDYLASE 1"/>
    <property type="match status" value="1"/>
</dbReference>
<dbReference type="PANTHER" id="PTHR11933">
    <property type="entry name" value="TRNA 5-METHYLAMINOMETHYL-2-THIOURIDYLATE -METHYLTRANSFERASE"/>
    <property type="match status" value="1"/>
</dbReference>
<dbReference type="Pfam" id="PF03054">
    <property type="entry name" value="tRNA_Me_trans"/>
    <property type="match status" value="1"/>
</dbReference>
<dbReference type="Pfam" id="PF20258">
    <property type="entry name" value="tRNA_Me_trans_C"/>
    <property type="match status" value="1"/>
</dbReference>
<dbReference type="Pfam" id="PF20259">
    <property type="entry name" value="tRNA_Me_trans_M"/>
    <property type="match status" value="1"/>
</dbReference>
<dbReference type="SUPFAM" id="SSF52402">
    <property type="entry name" value="Adenine nucleotide alpha hydrolases-like"/>
    <property type="match status" value="1"/>
</dbReference>
<feature type="chain" id="PRO_0000349630" description="tRNA-specific 2-thiouridylase MnmA">
    <location>
        <begin position="1"/>
        <end position="368"/>
    </location>
</feature>
<feature type="region of interest" description="Interaction with target base in tRNA" evidence="1">
    <location>
        <begin position="97"/>
        <end position="99"/>
    </location>
</feature>
<feature type="region of interest" description="Interaction with tRNA" evidence="1">
    <location>
        <begin position="149"/>
        <end position="151"/>
    </location>
</feature>
<feature type="region of interest" description="Interaction with tRNA" evidence="1">
    <location>
        <begin position="311"/>
        <end position="312"/>
    </location>
</feature>
<feature type="active site" description="Nucleophile" evidence="1">
    <location>
        <position position="102"/>
    </location>
</feature>
<feature type="active site" description="Cysteine persulfide intermediate" evidence="1">
    <location>
        <position position="199"/>
    </location>
</feature>
<feature type="binding site" evidence="1">
    <location>
        <begin position="11"/>
        <end position="18"/>
    </location>
    <ligand>
        <name>ATP</name>
        <dbReference type="ChEBI" id="CHEBI:30616"/>
    </ligand>
</feature>
<feature type="binding site" evidence="1">
    <location>
        <position position="37"/>
    </location>
    <ligand>
        <name>ATP</name>
        <dbReference type="ChEBI" id="CHEBI:30616"/>
    </ligand>
</feature>
<feature type="binding site" evidence="1">
    <location>
        <position position="127"/>
    </location>
    <ligand>
        <name>ATP</name>
        <dbReference type="ChEBI" id="CHEBI:30616"/>
    </ligand>
</feature>
<feature type="site" description="Interaction with tRNA" evidence="1">
    <location>
        <position position="128"/>
    </location>
</feature>
<feature type="site" description="Interaction with tRNA" evidence="1">
    <location>
        <position position="344"/>
    </location>
</feature>
<feature type="disulfide bond" description="Alternate" evidence="1">
    <location>
        <begin position="102"/>
        <end position="199"/>
    </location>
</feature>
<gene>
    <name evidence="1" type="primary">mnmA</name>
    <name type="ordered locus">EcE24377A_1296</name>
</gene>
<sequence>MSETAKKVIVGMSGGVDSSVSAWLLQQQGYQVEGLFMKNWEEDDGEEYCTAAADLADAQAVCDKLGIELHTVNFAAEYWDNVFELFLAEYKAGRTPNPDILCNKEIKFKAFLEFAAEDLGADYIATGHYVRRADVDGKSRLLRGLDSNKDQSYFLYTLSHEQIAQSLFPVGELEKPQVRKIAEDLGLVTAKKKDSTGICFIGERKFREFLGRYLPAQPGKIITVDGDEIGEHQGLMYHTLGQRKGLGIGGTKEGTEEPWYVVDKDVENNILVVAQGHEHPRLMSVGLIAQQLHWVDREPFTGTMRCTVKTRYRQTDIPCTVKALDDDRIEVIFDEPVAAVTPGQSAVFYNGEVCLGGGIIEQRLPLPV</sequence>
<organism>
    <name type="scientific">Escherichia coli O139:H28 (strain E24377A / ETEC)</name>
    <dbReference type="NCBI Taxonomy" id="331111"/>
    <lineage>
        <taxon>Bacteria</taxon>
        <taxon>Pseudomonadati</taxon>
        <taxon>Pseudomonadota</taxon>
        <taxon>Gammaproteobacteria</taxon>
        <taxon>Enterobacterales</taxon>
        <taxon>Enterobacteriaceae</taxon>
        <taxon>Escherichia</taxon>
    </lineage>
</organism>
<comment type="function">
    <text evidence="1">Catalyzes the 2-thiolation of uridine at the wobble position (U34) of tRNA(Lys), tRNA(Glu) and tRNA(Gln), leading to the formation of s(2)U34, the first step of tRNA-mnm(5)s(2)U34 synthesis. Sulfur is provided by IscS, via a sulfur-relay system. Binds ATP and its substrate tRNAs.</text>
</comment>
<comment type="catalytic activity">
    <reaction evidence="1">
        <text>S-sulfanyl-L-cysteinyl-[protein] + uridine(34) in tRNA + AH2 + ATP = 2-thiouridine(34) in tRNA + L-cysteinyl-[protein] + A + AMP + diphosphate + H(+)</text>
        <dbReference type="Rhea" id="RHEA:47032"/>
        <dbReference type="Rhea" id="RHEA-COMP:10131"/>
        <dbReference type="Rhea" id="RHEA-COMP:11726"/>
        <dbReference type="Rhea" id="RHEA-COMP:11727"/>
        <dbReference type="Rhea" id="RHEA-COMP:11728"/>
        <dbReference type="ChEBI" id="CHEBI:13193"/>
        <dbReference type="ChEBI" id="CHEBI:15378"/>
        <dbReference type="ChEBI" id="CHEBI:17499"/>
        <dbReference type="ChEBI" id="CHEBI:29950"/>
        <dbReference type="ChEBI" id="CHEBI:30616"/>
        <dbReference type="ChEBI" id="CHEBI:33019"/>
        <dbReference type="ChEBI" id="CHEBI:61963"/>
        <dbReference type="ChEBI" id="CHEBI:65315"/>
        <dbReference type="ChEBI" id="CHEBI:87170"/>
        <dbReference type="ChEBI" id="CHEBI:456215"/>
        <dbReference type="EC" id="2.8.1.13"/>
    </reaction>
</comment>
<comment type="subunit">
    <text evidence="1">Interacts with TusE.</text>
</comment>
<comment type="subcellular location">
    <subcellularLocation>
        <location evidence="1">Cytoplasm</location>
    </subcellularLocation>
</comment>
<comment type="similarity">
    <text evidence="1">Belongs to the MnmA/TRMU family.</text>
</comment>
<keyword id="KW-0067">ATP-binding</keyword>
<keyword id="KW-0963">Cytoplasm</keyword>
<keyword id="KW-1015">Disulfide bond</keyword>
<keyword id="KW-0547">Nucleotide-binding</keyword>
<keyword id="KW-1185">Reference proteome</keyword>
<keyword id="KW-0694">RNA-binding</keyword>
<keyword id="KW-0808">Transferase</keyword>
<keyword id="KW-0819">tRNA processing</keyword>
<keyword id="KW-0820">tRNA-binding</keyword>
<protein>
    <recommendedName>
        <fullName evidence="1">tRNA-specific 2-thiouridylase MnmA</fullName>
        <ecNumber evidence="1">2.8.1.13</ecNumber>
    </recommendedName>
</protein>
<accession>A7ZKS3</accession>
<proteinExistence type="inferred from homology"/>
<evidence type="ECO:0000255" key="1">
    <source>
        <dbReference type="HAMAP-Rule" id="MF_00144"/>
    </source>
</evidence>